<evidence type="ECO:0000255" key="1"/>
<evidence type="ECO:0000269" key="2">
    <source>
    </source>
</evidence>
<evidence type="ECO:0000305" key="3"/>
<evidence type="ECO:0007744" key="4">
    <source>
    </source>
</evidence>
<evidence type="ECO:0007744" key="5">
    <source>
    </source>
</evidence>
<keyword id="KW-0551">Lipid droplet</keyword>
<keyword id="KW-0472">Membrane</keyword>
<keyword id="KW-0597">Phosphoprotein</keyword>
<keyword id="KW-1185">Reference proteome</keyword>
<keyword id="KW-0812">Transmembrane</keyword>
<keyword id="KW-1133">Transmembrane helix</keyword>
<comment type="subcellular location">
    <subcellularLocation>
        <location>Membrane</location>
        <topology>Multi-pass membrane protein</topology>
    </subcellularLocation>
    <subcellularLocation>
        <location>Lipid droplet</location>
    </subcellularLocation>
    <text>Localized to punctate structures and lipid particles in the cytoplasm.</text>
</comment>
<comment type="miscellaneous">
    <text evidence="2">Present with 20400 molecules/cell in log phase SD medium.</text>
</comment>
<comment type="similarity">
    <text evidence="3">Belongs to the UPF0057 (PMP3) family.</text>
</comment>
<dbReference type="EMBL" id="U33057">
    <property type="status" value="NOT_ANNOTATED_CDS"/>
    <property type="molecule type" value="Genomic_DNA"/>
</dbReference>
<dbReference type="EMBL" id="AY558561">
    <property type="protein sequence ID" value="AAS56887.1"/>
    <property type="molecule type" value="Genomic_DNA"/>
</dbReference>
<dbReference type="EMBL" id="BK006938">
    <property type="protein sequence ID" value="DAA12357.1"/>
    <property type="molecule type" value="Genomic_DNA"/>
</dbReference>
<dbReference type="PIR" id="S78716">
    <property type="entry name" value="S78716"/>
</dbReference>
<dbReference type="RefSeq" id="NP_010814.1">
    <property type="nucleotide sequence ID" value="NM_001184329.1"/>
</dbReference>
<dbReference type="SMR" id="P56508"/>
<dbReference type="BioGRID" id="32575">
    <property type="interactions" value="50"/>
</dbReference>
<dbReference type="FunCoup" id="P56508">
    <property type="interactions" value="905"/>
</dbReference>
<dbReference type="IntAct" id="P56508">
    <property type="interactions" value="10"/>
</dbReference>
<dbReference type="STRING" id="4932.YDR525W-A"/>
<dbReference type="TCDB" id="9.B.12.3.3">
    <property type="family name" value="the sensitivity to sodium or salt stress-induced hydrophobic peptide (sna) family"/>
</dbReference>
<dbReference type="iPTMnet" id="P56508"/>
<dbReference type="PaxDb" id="4932-YDR525W-A"/>
<dbReference type="PeptideAtlas" id="P56508"/>
<dbReference type="TopDownProteomics" id="P56508"/>
<dbReference type="EnsemblFungi" id="YDR525W-A_mRNA">
    <property type="protein sequence ID" value="YDR525W-A"/>
    <property type="gene ID" value="YDR525W-A"/>
</dbReference>
<dbReference type="GeneID" id="852138"/>
<dbReference type="KEGG" id="sce:YDR525W-A"/>
<dbReference type="AGR" id="SGD:S000007236"/>
<dbReference type="SGD" id="S000007236">
    <property type="gene designation" value="SNA2"/>
</dbReference>
<dbReference type="VEuPathDB" id="FungiDB:YDR525W-A"/>
<dbReference type="eggNOG" id="KOG1773">
    <property type="taxonomic scope" value="Eukaryota"/>
</dbReference>
<dbReference type="HOGENOM" id="CLU_107649_5_0_1"/>
<dbReference type="InParanoid" id="P56508"/>
<dbReference type="OMA" id="HALWVIS"/>
<dbReference type="OrthoDB" id="2802411at2759"/>
<dbReference type="BioCyc" id="YEAST:G3O-30089-MONOMER"/>
<dbReference type="BioGRID-ORCS" id="852138">
    <property type="hits" value="5 hits in 10 CRISPR screens"/>
</dbReference>
<dbReference type="ChiTaRS" id="SNA2">
    <property type="organism name" value="yeast"/>
</dbReference>
<dbReference type="PRO" id="PR:P56508"/>
<dbReference type="Proteomes" id="UP000002311">
    <property type="component" value="Chromosome IV"/>
</dbReference>
<dbReference type="RNAct" id="P56508">
    <property type="molecule type" value="protein"/>
</dbReference>
<dbReference type="GO" id="GO:0005737">
    <property type="term" value="C:cytoplasm"/>
    <property type="evidence" value="ECO:0007005"/>
    <property type="project" value="SGD"/>
</dbReference>
<dbReference type="GO" id="GO:0000329">
    <property type="term" value="C:fungal-type vacuole membrane"/>
    <property type="evidence" value="ECO:0000314"/>
    <property type="project" value="SGD"/>
</dbReference>
<dbReference type="GO" id="GO:0005811">
    <property type="term" value="C:lipid droplet"/>
    <property type="evidence" value="ECO:0007669"/>
    <property type="project" value="UniProtKB-SubCell"/>
</dbReference>
<dbReference type="InterPro" id="IPR000612">
    <property type="entry name" value="PMP3"/>
</dbReference>
<dbReference type="PANTHER" id="PTHR21659">
    <property type="entry name" value="HYDROPHOBIC PROTEIN RCI2 LOW TEMPERATURE AND SALT RESPONSIVE PROTEIN LTI6 -RELATED"/>
    <property type="match status" value="1"/>
</dbReference>
<dbReference type="PANTHER" id="PTHR21659:SF112">
    <property type="entry name" value="PROTEIN SNA2-RELATED"/>
    <property type="match status" value="1"/>
</dbReference>
<dbReference type="Pfam" id="PF01679">
    <property type="entry name" value="Pmp3"/>
    <property type="match status" value="1"/>
</dbReference>
<dbReference type="PROSITE" id="PS01309">
    <property type="entry name" value="UPF0057"/>
    <property type="match status" value="1"/>
</dbReference>
<name>SNA2_YEAST</name>
<proteinExistence type="evidence at protein level"/>
<accession>P56508</accession>
<accession>D6VTE7</accession>
<reference key="1">
    <citation type="journal article" date="1997" name="Nature">
        <title>The nucleotide sequence of Saccharomyces cerevisiae chromosome IV.</title>
        <authorList>
            <person name="Jacq C."/>
            <person name="Alt-Moerbe J."/>
            <person name="Andre B."/>
            <person name="Arnold W."/>
            <person name="Bahr A."/>
            <person name="Ballesta J.P.G."/>
            <person name="Bargues M."/>
            <person name="Baron L."/>
            <person name="Becker A."/>
            <person name="Biteau N."/>
            <person name="Bloecker H."/>
            <person name="Blugeon C."/>
            <person name="Boskovic J."/>
            <person name="Brandt P."/>
            <person name="Brueckner M."/>
            <person name="Buitrago M.J."/>
            <person name="Coster F."/>
            <person name="Delaveau T."/>
            <person name="del Rey F."/>
            <person name="Dujon B."/>
            <person name="Eide L.G."/>
            <person name="Garcia-Cantalejo J.M."/>
            <person name="Goffeau A."/>
            <person name="Gomez-Peris A."/>
            <person name="Granotier C."/>
            <person name="Hanemann V."/>
            <person name="Hankeln T."/>
            <person name="Hoheisel J.D."/>
            <person name="Jaeger W."/>
            <person name="Jimenez A."/>
            <person name="Jonniaux J.-L."/>
            <person name="Kraemer C."/>
            <person name="Kuester H."/>
            <person name="Laamanen P."/>
            <person name="Legros Y."/>
            <person name="Louis E.J."/>
            <person name="Moeller-Rieker S."/>
            <person name="Monnet A."/>
            <person name="Moro M."/>
            <person name="Mueller-Auer S."/>
            <person name="Nussbaumer B."/>
            <person name="Paricio N."/>
            <person name="Paulin L."/>
            <person name="Perea J."/>
            <person name="Perez-Alonso M."/>
            <person name="Perez-Ortin J.E."/>
            <person name="Pohl T.M."/>
            <person name="Prydz H."/>
            <person name="Purnelle B."/>
            <person name="Rasmussen S.W."/>
            <person name="Remacha M.A."/>
            <person name="Revuelta J.L."/>
            <person name="Rieger M."/>
            <person name="Salom D."/>
            <person name="Saluz H.P."/>
            <person name="Saiz J.E."/>
            <person name="Saren A.-M."/>
            <person name="Schaefer M."/>
            <person name="Scharfe M."/>
            <person name="Schmidt E.R."/>
            <person name="Schneider C."/>
            <person name="Scholler P."/>
            <person name="Schwarz S."/>
            <person name="Soler-Mira A."/>
            <person name="Urrestarazu L.A."/>
            <person name="Verhasselt P."/>
            <person name="Vissers S."/>
            <person name="Voet M."/>
            <person name="Volckaert G."/>
            <person name="Wagner G."/>
            <person name="Wambutt R."/>
            <person name="Wedler E."/>
            <person name="Wedler H."/>
            <person name="Woelfl S."/>
            <person name="Harris D.E."/>
            <person name="Bowman S."/>
            <person name="Brown D."/>
            <person name="Churcher C.M."/>
            <person name="Connor R."/>
            <person name="Dedman K."/>
            <person name="Gentles S."/>
            <person name="Hamlin N."/>
            <person name="Hunt S."/>
            <person name="Jones L."/>
            <person name="McDonald S."/>
            <person name="Murphy L.D."/>
            <person name="Niblett D."/>
            <person name="Odell C."/>
            <person name="Oliver K."/>
            <person name="Rajandream M.A."/>
            <person name="Richards C."/>
            <person name="Shore L."/>
            <person name="Walsh S.V."/>
            <person name="Barrell B.G."/>
            <person name="Dietrich F.S."/>
            <person name="Mulligan J.T."/>
            <person name="Allen E."/>
            <person name="Araujo R."/>
            <person name="Aviles E."/>
            <person name="Berno A."/>
            <person name="Carpenter J."/>
            <person name="Chen E."/>
            <person name="Cherry J.M."/>
            <person name="Chung E."/>
            <person name="Duncan M."/>
            <person name="Hunicke-Smith S."/>
            <person name="Hyman R.W."/>
            <person name="Komp C."/>
            <person name="Lashkari D."/>
            <person name="Lew H."/>
            <person name="Lin D."/>
            <person name="Mosedale D."/>
            <person name="Nakahara K."/>
            <person name="Namath A."/>
            <person name="Oefner P."/>
            <person name="Oh C."/>
            <person name="Petel F.X."/>
            <person name="Roberts D."/>
            <person name="Schramm S."/>
            <person name="Schroeder M."/>
            <person name="Shogren T."/>
            <person name="Shroff N."/>
            <person name="Winant A."/>
            <person name="Yelton M.A."/>
            <person name="Botstein D."/>
            <person name="Davis R.W."/>
            <person name="Johnston M."/>
            <person name="Andrews S."/>
            <person name="Brinkman R."/>
            <person name="Cooper J."/>
            <person name="Ding H."/>
            <person name="Du Z."/>
            <person name="Favello A."/>
            <person name="Fulton L."/>
            <person name="Gattung S."/>
            <person name="Greco T."/>
            <person name="Hallsworth K."/>
            <person name="Hawkins J."/>
            <person name="Hillier L.W."/>
            <person name="Jier M."/>
            <person name="Johnson D."/>
            <person name="Johnston L."/>
            <person name="Kirsten J."/>
            <person name="Kucaba T."/>
            <person name="Langston Y."/>
            <person name="Latreille P."/>
            <person name="Le T."/>
            <person name="Mardis E."/>
            <person name="Menezes S."/>
            <person name="Miller N."/>
            <person name="Nhan M."/>
            <person name="Pauley A."/>
            <person name="Peluso D."/>
            <person name="Rifkin L."/>
            <person name="Riles L."/>
            <person name="Taich A."/>
            <person name="Trevaskis E."/>
            <person name="Vignati D."/>
            <person name="Wilcox L."/>
            <person name="Wohldman P."/>
            <person name="Vaudin M."/>
            <person name="Wilson R."/>
            <person name="Waterston R."/>
            <person name="Albermann K."/>
            <person name="Hani J."/>
            <person name="Heumann K."/>
            <person name="Kleine K."/>
            <person name="Mewes H.-W."/>
            <person name="Zollner A."/>
            <person name="Zaccaria P."/>
        </authorList>
    </citation>
    <scope>NUCLEOTIDE SEQUENCE [LARGE SCALE GENOMIC DNA]</scope>
    <source>
        <strain>ATCC 204508 / S288c</strain>
    </source>
</reference>
<reference key="2">
    <citation type="journal article" date="2014" name="G3 (Bethesda)">
        <title>The reference genome sequence of Saccharomyces cerevisiae: Then and now.</title>
        <authorList>
            <person name="Engel S.R."/>
            <person name="Dietrich F.S."/>
            <person name="Fisk D.G."/>
            <person name="Binkley G."/>
            <person name="Balakrishnan R."/>
            <person name="Costanzo M.C."/>
            <person name="Dwight S.S."/>
            <person name="Hitz B.C."/>
            <person name="Karra K."/>
            <person name="Nash R.S."/>
            <person name="Weng S."/>
            <person name="Wong E.D."/>
            <person name="Lloyd P."/>
            <person name="Skrzypek M.S."/>
            <person name="Miyasato S.R."/>
            <person name="Simison M."/>
            <person name="Cherry J.M."/>
        </authorList>
    </citation>
    <scope>GENOME REANNOTATION</scope>
    <source>
        <strain>ATCC 204508 / S288c</strain>
    </source>
</reference>
<reference key="3">
    <citation type="journal article" date="2007" name="Genome Res.">
        <title>Approaching a complete repository of sequence-verified protein-encoding clones for Saccharomyces cerevisiae.</title>
        <authorList>
            <person name="Hu Y."/>
            <person name="Rolfs A."/>
            <person name="Bhullar B."/>
            <person name="Murthy T.V.S."/>
            <person name="Zhu C."/>
            <person name="Berger M.F."/>
            <person name="Camargo A.A."/>
            <person name="Kelley F."/>
            <person name="McCarron S."/>
            <person name="Jepson D."/>
            <person name="Richardson A."/>
            <person name="Raphael J."/>
            <person name="Moreira D."/>
            <person name="Taycher E."/>
            <person name="Zuo D."/>
            <person name="Mohr S."/>
            <person name="Kane M.F."/>
            <person name="Williamson J."/>
            <person name="Simpson A.J.G."/>
            <person name="Bulyk M.L."/>
            <person name="Harlow E."/>
            <person name="Marsischky G."/>
            <person name="Kolodner R.D."/>
            <person name="LaBaer J."/>
        </authorList>
    </citation>
    <scope>NUCLEOTIDE SEQUENCE [GENOMIC DNA]</scope>
    <source>
        <strain>ATCC 204508 / S288c</strain>
    </source>
</reference>
<reference key="4">
    <citation type="journal article" date="1998" name="Electrophoresis">
        <title>Low molecular weight proteins: a challenge for post-genomic research.</title>
        <authorList>
            <person name="Rudd K.E."/>
            <person name="Humphery-Smith I."/>
            <person name="Wasinger V.C."/>
            <person name="Bairoch A."/>
        </authorList>
    </citation>
    <scope>IDENTIFICATION</scope>
</reference>
<reference key="5">
    <citation type="journal article" date="2001" name="EMBO J.">
        <title>Sorting of proteins into multivesicular bodies: ubiquitin-dependent and -independent targeting.</title>
        <authorList>
            <person name="Reggiori F."/>
            <person name="Pelham H.R.B."/>
        </authorList>
    </citation>
    <scope>SUBCELLULAR LOCATION</scope>
</reference>
<reference key="6">
    <citation type="journal article" date="2003" name="J. Biol. Chem.">
        <title>Topology models for 37 Saccharomyces cerevisiae membrane proteins based on C-terminal reporter fusions and predictions.</title>
        <authorList>
            <person name="Kim H."/>
            <person name="Melen K."/>
            <person name="von Heijne G."/>
        </authorList>
    </citation>
    <scope>TOPOLOGY</scope>
</reference>
<reference key="7">
    <citation type="journal article" date="2003" name="Nature">
        <title>Global analysis of protein localization in budding yeast.</title>
        <authorList>
            <person name="Huh W.-K."/>
            <person name="Falvo J.V."/>
            <person name="Gerke L.C."/>
            <person name="Carroll A.S."/>
            <person name="Howson R.W."/>
            <person name="Weissman J.S."/>
            <person name="O'Shea E.K."/>
        </authorList>
    </citation>
    <scope>SUBCELLULAR LOCATION [LARGE SCALE ANALYSIS]</scope>
</reference>
<reference key="8">
    <citation type="journal article" date="2003" name="Nature">
        <title>Global analysis of protein expression in yeast.</title>
        <authorList>
            <person name="Ghaemmaghami S."/>
            <person name="Huh W.-K."/>
            <person name="Bower K."/>
            <person name="Howson R.W."/>
            <person name="Belle A."/>
            <person name="Dephoure N."/>
            <person name="O'Shea E.K."/>
            <person name="Weissman J.S."/>
        </authorList>
    </citation>
    <scope>LEVEL OF PROTEIN EXPRESSION [LARGE SCALE ANALYSIS]</scope>
</reference>
<reference key="9">
    <citation type="journal article" date="2006" name="Proc. Natl. Acad. Sci. U.S.A.">
        <title>A global topology map of the Saccharomyces cerevisiae membrane proteome.</title>
        <authorList>
            <person name="Kim H."/>
            <person name="Melen K."/>
            <person name="Oesterberg M."/>
            <person name="von Heijne G."/>
        </authorList>
    </citation>
    <scope>TOPOLOGY [LARGE SCALE ANALYSIS]</scope>
    <source>
        <strain>ATCC 208353 / W303-1A</strain>
    </source>
</reference>
<reference key="10">
    <citation type="journal article" date="2008" name="Mol. Cell. Proteomics">
        <title>A multidimensional chromatography technology for in-depth phosphoproteome analysis.</title>
        <authorList>
            <person name="Albuquerque C.P."/>
            <person name="Smolka M.B."/>
            <person name="Payne S.H."/>
            <person name="Bafna V."/>
            <person name="Eng J."/>
            <person name="Zhou H."/>
        </authorList>
    </citation>
    <scope>PHOSPHORYLATION [LARGE SCALE ANALYSIS] AT SER-77</scope>
    <scope>IDENTIFICATION BY MASS SPECTROMETRY [LARGE SCALE ANALYSIS]</scope>
</reference>
<reference key="11">
    <citation type="journal article" date="2009" name="Science">
        <title>Global analysis of Cdk1 substrate phosphorylation sites provides insights into evolution.</title>
        <authorList>
            <person name="Holt L.J."/>
            <person name="Tuch B.B."/>
            <person name="Villen J."/>
            <person name="Johnson A.D."/>
            <person name="Gygi S.P."/>
            <person name="Morgan D.O."/>
        </authorList>
    </citation>
    <scope>PHOSPHORYLATION [LARGE SCALE ANALYSIS] AT SER-71</scope>
    <scope>IDENTIFICATION BY MASS SPECTROMETRY [LARGE SCALE ANALYSIS]</scope>
</reference>
<organism>
    <name type="scientific">Saccharomyces cerevisiae (strain ATCC 204508 / S288c)</name>
    <name type="common">Baker's yeast</name>
    <dbReference type="NCBI Taxonomy" id="559292"/>
    <lineage>
        <taxon>Eukaryota</taxon>
        <taxon>Fungi</taxon>
        <taxon>Dikarya</taxon>
        <taxon>Ascomycota</taxon>
        <taxon>Saccharomycotina</taxon>
        <taxon>Saccharomycetes</taxon>
        <taxon>Saccharomycetales</taxon>
        <taxon>Saccharomycetaceae</taxon>
        <taxon>Saccharomyces</taxon>
    </lineage>
</organism>
<sequence length="79" mass="9180">MHARDWFLVFIAIFIPPLAVWLKRGFFTKDLLINFLLFLLGFFPGLIHALYVISCHPYEENEARYSHLSSSDDNYGSLA</sequence>
<gene>
    <name type="primary">SNA2</name>
    <name type="ordered locus">YDR525W-A</name>
    <name type="ORF">YDR525BW</name>
</gene>
<protein>
    <recommendedName>
        <fullName>Protein SNA2</fullName>
    </recommendedName>
</protein>
<feature type="chain" id="PRO_0000193989" description="Protein SNA2">
    <location>
        <begin position="1"/>
        <end position="79"/>
    </location>
</feature>
<feature type="topological domain" description="Cytoplasmic" evidence="1">
    <location>
        <begin position="1"/>
        <end position="6"/>
    </location>
</feature>
<feature type="transmembrane region" description="Helical" evidence="1">
    <location>
        <begin position="7"/>
        <end position="27"/>
    </location>
</feature>
<feature type="topological domain" description="Vesicular" evidence="1">
    <location>
        <begin position="28"/>
        <end position="32"/>
    </location>
</feature>
<feature type="transmembrane region" description="Helical" evidence="1">
    <location>
        <begin position="33"/>
        <end position="53"/>
    </location>
</feature>
<feature type="topological domain" description="Cytoplasmic" evidence="1">
    <location>
        <begin position="54"/>
        <end position="79"/>
    </location>
</feature>
<feature type="modified residue" description="Phosphoserine" evidence="5">
    <location>
        <position position="71"/>
    </location>
</feature>
<feature type="modified residue" description="Phosphoserine" evidence="4">
    <location>
        <position position="77"/>
    </location>
</feature>